<name>NUSB_METI4</name>
<gene>
    <name evidence="1" type="primary">nusB</name>
    <name type="ordered locus">Minf_1662</name>
</gene>
<organism>
    <name type="scientific">Methylacidiphilum infernorum (isolate V4)</name>
    <name type="common">Methylokorus infernorum (strain V4)</name>
    <dbReference type="NCBI Taxonomy" id="481448"/>
    <lineage>
        <taxon>Bacteria</taxon>
        <taxon>Pseudomonadati</taxon>
        <taxon>Verrucomicrobiota</taxon>
        <taxon>Methylacidiphilae</taxon>
        <taxon>Methylacidiphilales</taxon>
        <taxon>Methylacidiphilaceae</taxon>
        <taxon>Methylacidiphilum (ex Ratnadevi et al. 2023)</taxon>
    </lineage>
</organism>
<comment type="function">
    <text evidence="1">Involved in transcription antitermination. Required for transcription of ribosomal RNA (rRNA) genes. Binds specifically to the boxA antiterminator sequence of the ribosomal RNA (rrn) operons.</text>
</comment>
<comment type="similarity">
    <text evidence="1">Belongs to the NusB family.</text>
</comment>
<feature type="chain" id="PRO_1000202485" description="Transcription antitermination protein NusB">
    <location>
        <begin position="1"/>
        <end position="143"/>
    </location>
</feature>
<sequence>MISRRKIRELIVQFLYQWEMNKGVGLDNMLLDFWDFSPLDQKDKEAVEQWLKEIAEHKEAIEEKINSYVKNWSLDRLAPVDKCILILGIYEILYRKDIPPAVSINESVEIAKKYSTEESGKFVNGILDSVLKDSGRKAWMSCP</sequence>
<proteinExistence type="inferred from homology"/>
<evidence type="ECO:0000255" key="1">
    <source>
        <dbReference type="HAMAP-Rule" id="MF_00073"/>
    </source>
</evidence>
<accession>B3DWQ3</accession>
<protein>
    <recommendedName>
        <fullName evidence="1">Transcription antitermination protein NusB</fullName>
    </recommendedName>
    <alternativeName>
        <fullName evidence="1">Antitermination factor NusB</fullName>
    </alternativeName>
</protein>
<reference key="1">
    <citation type="journal article" date="2008" name="Biol. Direct">
        <title>Complete genome sequence of the extremely acidophilic methanotroph isolate V4, Methylacidiphilum infernorum, a representative of the bacterial phylum Verrucomicrobia.</title>
        <authorList>
            <person name="Hou S."/>
            <person name="Makarova K.S."/>
            <person name="Saw J.H."/>
            <person name="Senin P."/>
            <person name="Ly B.V."/>
            <person name="Zhou Z."/>
            <person name="Ren Y."/>
            <person name="Wang J."/>
            <person name="Galperin M.Y."/>
            <person name="Omelchenko M.V."/>
            <person name="Wolf Y.I."/>
            <person name="Yutin N."/>
            <person name="Koonin E.V."/>
            <person name="Stott M.B."/>
            <person name="Mountain B.W."/>
            <person name="Crowe M.A."/>
            <person name="Smirnova A.V."/>
            <person name="Dunfield P.F."/>
            <person name="Feng L."/>
            <person name="Wang L."/>
            <person name="Alam M."/>
        </authorList>
    </citation>
    <scope>NUCLEOTIDE SEQUENCE [LARGE SCALE GENOMIC DNA]</scope>
    <source>
        <strain>Isolate V4</strain>
    </source>
</reference>
<keyword id="KW-0694">RNA-binding</keyword>
<keyword id="KW-0804">Transcription</keyword>
<keyword id="KW-0889">Transcription antitermination</keyword>
<keyword id="KW-0805">Transcription regulation</keyword>
<dbReference type="EMBL" id="CP000975">
    <property type="protein sequence ID" value="ACD83716.1"/>
    <property type="molecule type" value="Genomic_DNA"/>
</dbReference>
<dbReference type="RefSeq" id="WP_012463998.1">
    <property type="nucleotide sequence ID" value="NC_010794.1"/>
</dbReference>
<dbReference type="SMR" id="B3DWQ3"/>
<dbReference type="STRING" id="481448.Minf_1662"/>
<dbReference type="KEGG" id="min:Minf_1662"/>
<dbReference type="eggNOG" id="COG0781">
    <property type="taxonomic scope" value="Bacteria"/>
</dbReference>
<dbReference type="HOGENOM" id="CLU_087843_3_3_0"/>
<dbReference type="OrthoDB" id="9811381at2"/>
<dbReference type="Proteomes" id="UP000009149">
    <property type="component" value="Chromosome"/>
</dbReference>
<dbReference type="GO" id="GO:0005829">
    <property type="term" value="C:cytosol"/>
    <property type="evidence" value="ECO:0007669"/>
    <property type="project" value="TreeGrafter"/>
</dbReference>
<dbReference type="GO" id="GO:0003723">
    <property type="term" value="F:RNA binding"/>
    <property type="evidence" value="ECO:0007669"/>
    <property type="project" value="UniProtKB-UniRule"/>
</dbReference>
<dbReference type="GO" id="GO:0006353">
    <property type="term" value="P:DNA-templated transcription termination"/>
    <property type="evidence" value="ECO:0007669"/>
    <property type="project" value="UniProtKB-UniRule"/>
</dbReference>
<dbReference type="GO" id="GO:0031564">
    <property type="term" value="P:transcription antitermination"/>
    <property type="evidence" value="ECO:0007669"/>
    <property type="project" value="UniProtKB-KW"/>
</dbReference>
<dbReference type="Gene3D" id="1.10.940.10">
    <property type="entry name" value="NusB-like"/>
    <property type="match status" value="1"/>
</dbReference>
<dbReference type="HAMAP" id="MF_00073">
    <property type="entry name" value="NusB"/>
    <property type="match status" value="1"/>
</dbReference>
<dbReference type="InterPro" id="IPR035926">
    <property type="entry name" value="NusB-like_sf"/>
</dbReference>
<dbReference type="InterPro" id="IPR011605">
    <property type="entry name" value="NusB_fam"/>
</dbReference>
<dbReference type="InterPro" id="IPR006027">
    <property type="entry name" value="NusB_RsmB_TIM44"/>
</dbReference>
<dbReference type="NCBIfam" id="TIGR01951">
    <property type="entry name" value="nusB"/>
    <property type="match status" value="1"/>
</dbReference>
<dbReference type="PANTHER" id="PTHR11078:SF3">
    <property type="entry name" value="ANTITERMINATION NUSB DOMAIN-CONTAINING PROTEIN"/>
    <property type="match status" value="1"/>
</dbReference>
<dbReference type="PANTHER" id="PTHR11078">
    <property type="entry name" value="N UTILIZATION SUBSTANCE PROTEIN B-RELATED"/>
    <property type="match status" value="1"/>
</dbReference>
<dbReference type="Pfam" id="PF01029">
    <property type="entry name" value="NusB"/>
    <property type="match status" value="1"/>
</dbReference>
<dbReference type="SUPFAM" id="SSF48013">
    <property type="entry name" value="NusB-like"/>
    <property type="match status" value="1"/>
</dbReference>